<organism>
    <name type="scientific">Sulfurimonas denitrificans (strain ATCC 33889 / DSM 1251)</name>
    <name type="common">Thiomicrospira denitrificans (strain ATCC 33889 / DSM 1251)</name>
    <dbReference type="NCBI Taxonomy" id="326298"/>
    <lineage>
        <taxon>Bacteria</taxon>
        <taxon>Pseudomonadati</taxon>
        <taxon>Campylobacterota</taxon>
        <taxon>Epsilonproteobacteria</taxon>
        <taxon>Campylobacterales</taxon>
        <taxon>Sulfurimonadaceae</taxon>
        <taxon>Sulfurimonas</taxon>
    </lineage>
</organism>
<gene>
    <name evidence="1" type="primary">coaX</name>
    <name type="ordered locus">Suden_0888</name>
</gene>
<sequence>MLLCDIGNTTYHFFDENSSYKEDAKLFNPSSIKREVFYICVNSSVKERLSLLDNWIDLSLHVDMSRYYKTMGIDRIMACEAIESGVVVDAGSAITVDIIKNGNFEGGFIYAGVKAMNECYKNISAQLEYSFNFELDLDKMPKNSRDAISYGYLGLLYKEVASYGMKIYLTGGDAGQFSKLFLNSDVDELLLFKGMKNIMKKANLC</sequence>
<protein>
    <recommendedName>
        <fullName evidence="1">Type III pantothenate kinase</fullName>
        <ecNumber evidence="1">2.7.1.33</ecNumber>
    </recommendedName>
    <alternativeName>
        <fullName evidence="1">PanK-III</fullName>
    </alternativeName>
    <alternativeName>
        <fullName evidence="1">Pantothenic acid kinase</fullName>
    </alternativeName>
</protein>
<comment type="function">
    <text evidence="1">Catalyzes the phosphorylation of pantothenate (Pan), the first step in CoA biosynthesis.</text>
</comment>
<comment type="catalytic activity">
    <reaction evidence="1">
        <text>(R)-pantothenate + ATP = (R)-4'-phosphopantothenate + ADP + H(+)</text>
        <dbReference type="Rhea" id="RHEA:16373"/>
        <dbReference type="ChEBI" id="CHEBI:10986"/>
        <dbReference type="ChEBI" id="CHEBI:15378"/>
        <dbReference type="ChEBI" id="CHEBI:29032"/>
        <dbReference type="ChEBI" id="CHEBI:30616"/>
        <dbReference type="ChEBI" id="CHEBI:456216"/>
        <dbReference type="EC" id="2.7.1.33"/>
    </reaction>
</comment>
<comment type="cofactor">
    <cofactor evidence="1">
        <name>NH4(+)</name>
        <dbReference type="ChEBI" id="CHEBI:28938"/>
    </cofactor>
    <cofactor evidence="1">
        <name>K(+)</name>
        <dbReference type="ChEBI" id="CHEBI:29103"/>
    </cofactor>
    <text evidence="1">A monovalent cation. Ammonium or potassium.</text>
</comment>
<comment type="pathway">
    <text evidence="1">Cofactor biosynthesis; coenzyme A biosynthesis; CoA from (R)-pantothenate: step 1/5.</text>
</comment>
<comment type="subunit">
    <text evidence="1">Homodimer.</text>
</comment>
<comment type="subcellular location">
    <subcellularLocation>
        <location evidence="1">Cytoplasm</location>
    </subcellularLocation>
</comment>
<comment type="similarity">
    <text evidence="1">Belongs to the type III pantothenate kinase family.</text>
</comment>
<accession>Q30S65</accession>
<evidence type="ECO:0000255" key="1">
    <source>
        <dbReference type="HAMAP-Rule" id="MF_01274"/>
    </source>
</evidence>
<proteinExistence type="inferred from homology"/>
<keyword id="KW-0067">ATP-binding</keyword>
<keyword id="KW-0173">Coenzyme A biosynthesis</keyword>
<keyword id="KW-0963">Cytoplasm</keyword>
<keyword id="KW-0418">Kinase</keyword>
<keyword id="KW-0479">Metal-binding</keyword>
<keyword id="KW-0547">Nucleotide-binding</keyword>
<keyword id="KW-0630">Potassium</keyword>
<keyword id="KW-1185">Reference proteome</keyword>
<keyword id="KW-0808">Transferase</keyword>
<feature type="chain" id="PRO_0000267601" description="Type III pantothenate kinase">
    <location>
        <begin position="1"/>
        <end position="205"/>
    </location>
</feature>
<feature type="active site" description="Proton acceptor" evidence="1">
    <location>
        <position position="74"/>
    </location>
</feature>
<feature type="binding site" evidence="1">
    <location>
        <begin position="5"/>
        <end position="12"/>
    </location>
    <ligand>
        <name>ATP</name>
        <dbReference type="ChEBI" id="CHEBI:30616"/>
    </ligand>
</feature>
<feature type="binding site" evidence="1">
    <location>
        <position position="68"/>
    </location>
    <ligand>
        <name>substrate</name>
    </ligand>
</feature>
<feature type="binding site" evidence="1">
    <location>
        <begin position="72"/>
        <end position="75"/>
    </location>
    <ligand>
        <name>substrate</name>
    </ligand>
</feature>
<feature type="binding site" evidence="1">
    <location>
        <position position="89"/>
    </location>
    <ligand>
        <name>K(+)</name>
        <dbReference type="ChEBI" id="CHEBI:29103"/>
    </ligand>
</feature>
<feature type="binding site" evidence="1">
    <location>
        <position position="92"/>
    </location>
    <ligand>
        <name>ATP</name>
        <dbReference type="ChEBI" id="CHEBI:30616"/>
    </ligand>
</feature>
<feature type="binding site" evidence="1">
    <location>
        <position position="144"/>
    </location>
    <ligand>
        <name>substrate</name>
    </ligand>
</feature>
<dbReference type="EC" id="2.7.1.33" evidence="1"/>
<dbReference type="EMBL" id="CP000153">
    <property type="protein sequence ID" value="ABB44166.1"/>
    <property type="molecule type" value="Genomic_DNA"/>
</dbReference>
<dbReference type="SMR" id="Q30S65"/>
<dbReference type="STRING" id="326298.Suden_0888"/>
<dbReference type="KEGG" id="tdn:Suden_0888"/>
<dbReference type="eggNOG" id="COG1521">
    <property type="taxonomic scope" value="Bacteria"/>
</dbReference>
<dbReference type="HOGENOM" id="CLU_1213471_0_0_7"/>
<dbReference type="OrthoDB" id="5347692at2"/>
<dbReference type="UniPathway" id="UPA00241">
    <property type="reaction ID" value="UER00352"/>
</dbReference>
<dbReference type="Proteomes" id="UP000002714">
    <property type="component" value="Chromosome"/>
</dbReference>
<dbReference type="GO" id="GO:0005737">
    <property type="term" value="C:cytoplasm"/>
    <property type="evidence" value="ECO:0007669"/>
    <property type="project" value="UniProtKB-SubCell"/>
</dbReference>
<dbReference type="GO" id="GO:0005524">
    <property type="term" value="F:ATP binding"/>
    <property type="evidence" value="ECO:0007669"/>
    <property type="project" value="UniProtKB-UniRule"/>
</dbReference>
<dbReference type="GO" id="GO:0046872">
    <property type="term" value="F:metal ion binding"/>
    <property type="evidence" value="ECO:0007669"/>
    <property type="project" value="UniProtKB-KW"/>
</dbReference>
<dbReference type="GO" id="GO:0004594">
    <property type="term" value="F:pantothenate kinase activity"/>
    <property type="evidence" value="ECO:0007669"/>
    <property type="project" value="UniProtKB-UniRule"/>
</dbReference>
<dbReference type="GO" id="GO:0015937">
    <property type="term" value="P:coenzyme A biosynthetic process"/>
    <property type="evidence" value="ECO:0007669"/>
    <property type="project" value="UniProtKB-UniRule"/>
</dbReference>
<dbReference type="CDD" id="cd24015">
    <property type="entry name" value="ASKHA_NBD_PanK-III"/>
    <property type="match status" value="1"/>
</dbReference>
<dbReference type="Gene3D" id="3.30.420.40">
    <property type="match status" value="2"/>
</dbReference>
<dbReference type="HAMAP" id="MF_01274">
    <property type="entry name" value="Pantothen_kinase_3"/>
    <property type="match status" value="1"/>
</dbReference>
<dbReference type="InterPro" id="IPR043129">
    <property type="entry name" value="ATPase_NBD"/>
</dbReference>
<dbReference type="InterPro" id="IPR004619">
    <property type="entry name" value="Type_III_PanK"/>
</dbReference>
<dbReference type="NCBIfam" id="TIGR00671">
    <property type="entry name" value="baf"/>
    <property type="match status" value="1"/>
</dbReference>
<dbReference type="NCBIfam" id="NF009872">
    <property type="entry name" value="PRK13333.1"/>
    <property type="match status" value="1"/>
</dbReference>
<dbReference type="PANTHER" id="PTHR34265">
    <property type="entry name" value="TYPE III PANTOTHENATE KINASE"/>
    <property type="match status" value="1"/>
</dbReference>
<dbReference type="PANTHER" id="PTHR34265:SF1">
    <property type="entry name" value="TYPE III PANTOTHENATE KINASE"/>
    <property type="match status" value="1"/>
</dbReference>
<dbReference type="Pfam" id="PF03309">
    <property type="entry name" value="Pan_kinase"/>
    <property type="match status" value="1"/>
</dbReference>
<dbReference type="SUPFAM" id="SSF53067">
    <property type="entry name" value="Actin-like ATPase domain"/>
    <property type="match status" value="2"/>
</dbReference>
<reference key="1">
    <citation type="journal article" date="2008" name="Appl. Environ. Microbiol.">
        <title>Genome of the epsilonproteobacterial chemolithoautotroph Sulfurimonas denitrificans.</title>
        <authorList>
            <person name="Sievert S.M."/>
            <person name="Scott K.M."/>
            <person name="Klotz M.G."/>
            <person name="Chain P.S.G."/>
            <person name="Hauser L.J."/>
            <person name="Hemp J."/>
            <person name="Huegler M."/>
            <person name="Land M."/>
            <person name="Lapidus A."/>
            <person name="Larimer F.W."/>
            <person name="Lucas S."/>
            <person name="Malfatti S.A."/>
            <person name="Meyer F."/>
            <person name="Paulsen I.T."/>
            <person name="Ren Q."/>
            <person name="Simon J."/>
            <person name="Bailey K."/>
            <person name="Diaz E."/>
            <person name="Fitzpatrick K.A."/>
            <person name="Glover B."/>
            <person name="Gwatney N."/>
            <person name="Korajkic A."/>
            <person name="Long A."/>
            <person name="Mobberley J.M."/>
            <person name="Pantry S.N."/>
            <person name="Pazder G."/>
            <person name="Peterson S."/>
            <person name="Quintanilla J.D."/>
            <person name="Sprinkle R."/>
            <person name="Stephens J."/>
            <person name="Thomas P."/>
            <person name="Vaughn R."/>
            <person name="Weber M.J."/>
            <person name="Wooten L.L."/>
        </authorList>
    </citation>
    <scope>NUCLEOTIDE SEQUENCE [LARGE SCALE GENOMIC DNA]</scope>
    <source>
        <strain>ATCC 33889 / DSM 1251</strain>
    </source>
</reference>
<name>COAX_SULDN</name>